<dbReference type="EMBL" id="FO080288">
    <property type="protein sequence ID" value="CCD62640.1"/>
    <property type="molecule type" value="Genomic_DNA"/>
</dbReference>
<dbReference type="PIR" id="S44604">
    <property type="entry name" value="S44604"/>
</dbReference>
<dbReference type="RefSeq" id="NP_498810.2">
    <property type="nucleotide sequence ID" value="NM_066409.3"/>
</dbReference>
<dbReference type="FunCoup" id="P34279">
    <property type="interactions" value="33"/>
</dbReference>
<dbReference type="PaxDb" id="6239-C02F5.2"/>
<dbReference type="EnsemblMetazoa" id="C02F5.2.1">
    <property type="protein sequence ID" value="C02F5.2.1"/>
    <property type="gene ID" value="WBGene00015345"/>
</dbReference>
<dbReference type="GeneID" id="182121"/>
<dbReference type="KEGG" id="cel:CELE_C02F5.2"/>
<dbReference type="UCSC" id="C02F5.2">
    <property type="organism name" value="c. elegans"/>
</dbReference>
<dbReference type="AGR" id="WB:WBGene00015345"/>
<dbReference type="CTD" id="182121"/>
<dbReference type="WormBase" id="C02F5.2">
    <property type="protein sequence ID" value="CE44142"/>
    <property type="gene ID" value="WBGene00015345"/>
</dbReference>
<dbReference type="eggNOG" id="ENOG502THQ8">
    <property type="taxonomic scope" value="Eukaryota"/>
</dbReference>
<dbReference type="GeneTree" id="ENSGT00970000196697"/>
<dbReference type="HOGENOM" id="CLU_148876_0_0_1"/>
<dbReference type="InParanoid" id="P34279"/>
<dbReference type="OMA" id="EHHNLAR"/>
<dbReference type="OrthoDB" id="5875813at2759"/>
<dbReference type="PRO" id="PR:P34279"/>
<dbReference type="Proteomes" id="UP000001940">
    <property type="component" value="Chromosome III"/>
</dbReference>
<dbReference type="Bgee" id="WBGene00015345">
    <property type="expression patterns" value="Expressed in adult organism and 2 other cell types or tissues"/>
</dbReference>
<dbReference type="InterPro" id="IPR020149">
    <property type="entry name" value="Uncharacterised_C02F5.10"/>
</dbReference>
<dbReference type="Pfam" id="PF17309">
    <property type="entry name" value="DUF5356"/>
    <property type="match status" value="1"/>
</dbReference>
<name>YKK2_CAEEL</name>
<organism>
    <name type="scientific">Caenorhabditis elegans</name>
    <dbReference type="NCBI Taxonomy" id="6239"/>
    <lineage>
        <taxon>Eukaryota</taxon>
        <taxon>Metazoa</taxon>
        <taxon>Ecdysozoa</taxon>
        <taxon>Nematoda</taxon>
        <taxon>Chromadorea</taxon>
        <taxon>Rhabditida</taxon>
        <taxon>Rhabditina</taxon>
        <taxon>Rhabditomorpha</taxon>
        <taxon>Rhabditoidea</taxon>
        <taxon>Rhabditidae</taxon>
        <taxon>Peloderinae</taxon>
        <taxon>Caenorhabditis</taxon>
    </lineage>
</organism>
<accession>P34279</accession>
<gene>
    <name type="ORF">C02F5.2</name>
</gene>
<feature type="chain" id="PRO_0000065108" description="Uncharacterized protein C02F5.2">
    <location>
        <begin position="1"/>
        <end position="128"/>
    </location>
</feature>
<feature type="region of interest" description="Disordered" evidence="1">
    <location>
        <begin position="1"/>
        <end position="40"/>
    </location>
</feature>
<feature type="compositionally biased region" description="Basic and acidic residues" evidence="1">
    <location>
        <begin position="1"/>
        <end position="11"/>
    </location>
</feature>
<feature type="compositionally biased region" description="Polar residues" evidence="1">
    <location>
        <begin position="12"/>
        <end position="37"/>
    </location>
</feature>
<proteinExistence type="predicted"/>
<evidence type="ECO:0000256" key="1">
    <source>
        <dbReference type="SAM" id="MobiDB-lite"/>
    </source>
</evidence>
<keyword id="KW-1185">Reference proteome</keyword>
<sequence>MDNKKKEENPSKSDTSISLPPSSTGEALQNYTESEWNASDDPYSAELLNVKKKPNRVNVFSATEKNMETIIVTEESPPQTPLPLKPVVEHHNLARLIQKSCQLLLDKTTPDGTEVQIKLEFPDWRDTA</sequence>
<protein>
    <recommendedName>
        <fullName>Uncharacterized protein C02F5.2</fullName>
    </recommendedName>
</protein>
<reference key="1">
    <citation type="journal article" date="1994" name="Nature">
        <title>2.2 Mb of contiguous nucleotide sequence from chromosome III of C. elegans.</title>
        <authorList>
            <person name="Wilson R."/>
            <person name="Ainscough R."/>
            <person name="Anderson K."/>
            <person name="Baynes C."/>
            <person name="Berks M."/>
            <person name="Bonfield J."/>
            <person name="Burton J."/>
            <person name="Connell M."/>
            <person name="Copsey T."/>
            <person name="Cooper J."/>
            <person name="Coulson A."/>
            <person name="Craxton M."/>
            <person name="Dear S."/>
            <person name="Du Z."/>
            <person name="Durbin R."/>
            <person name="Favello A."/>
            <person name="Fraser A."/>
            <person name="Fulton L."/>
            <person name="Gardner A."/>
            <person name="Green P."/>
            <person name="Hawkins T."/>
            <person name="Hillier L."/>
            <person name="Jier M."/>
            <person name="Johnston L."/>
            <person name="Jones M."/>
            <person name="Kershaw J."/>
            <person name="Kirsten J."/>
            <person name="Laisster N."/>
            <person name="Latreille P."/>
            <person name="Lightning J."/>
            <person name="Lloyd C."/>
            <person name="Mortimore B."/>
            <person name="O'Callaghan M."/>
            <person name="Parsons J."/>
            <person name="Percy C."/>
            <person name="Rifken L."/>
            <person name="Roopra A."/>
            <person name="Saunders D."/>
            <person name="Shownkeen R."/>
            <person name="Sims M."/>
            <person name="Smaldon N."/>
            <person name="Smith A."/>
            <person name="Smith M."/>
            <person name="Sonnhammer E."/>
            <person name="Staden R."/>
            <person name="Sulston J."/>
            <person name="Thierry-Mieg J."/>
            <person name="Thomas K."/>
            <person name="Vaudin M."/>
            <person name="Vaughan K."/>
            <person name="Waterston R."/>
            <person name="Watson A."/>
            <person name="Weinstock L."/>
            <person name="Wilkinson-Sproat J."/>
            <person name="Wohldman P."/>
        </authorList>
    </citation>
    <scope>NUCLEOTIDE SEQUENCE [LARGE SCALE GENOMIC DNA]</scope>
    <source>
        <strain>Bristol N2</strain>
    </source>
</reference>
<reference key="2">
    <citation type="journal article" date="1998" name="Science">
        <title>Genome sequence of the nematode C. elegans: a platform for investigating biology.</title>
        <authorList>
            <consortium name="The C. elegans sequencing consortium"/>
        </authorList>
    </citation>
    <scope>NUCLEOTIDE SEQUENCE [LARGE SCALE GENOMIC DNA]</scope>
    <source>
        <strain>Bristol N2</strain>
    </source>
</reference>